<evidence type="ECO:0000250" key="1"/>
<evidence type="ECO:0000250" key="2">
    <source>
        <dbReference type="UniProtKB" id="Q9BS40"/>
    </source>
</evidence>
<evidence type="ECO:0000255" key="3">
    <source>
        <dbReference type="PROSITE-ProRule" id="PRU01377"/>
    </source>
</evidence>
<evidence type="ECO:0000269" key="4">
    <source>
    </source>
</evidence>
<evidence type="ECO:0000305" key="5"/>
<evidence type="ECO:0007829" key="6">
    <source>
        <dbReference type="PDB" id="1WNH"/>
    </source>
</evidence>
<name>LXN_MOUSE</name>
<gene>
    <name type="primary">Lxn</name>
</gene>
<feature type="chain" id="PRO_0000191344" description="Latexin">
    <location>
        <begin position="1"/>
        <end position="222"/>
    </location>
</feature>
<feature type="domain" description="Cystatin LXN-type 1" evidence="3">
    <location>
        <begin position="1"/>
        <end position="97"/>
    </location>
</feature>
<feature type="domain" description="Cystatin LXN-type 2" evidence="3">
    <location>
        <begin position="118"/>
        <end position="222"/>
    </location>
</feature>
<feature type="region of interest" description="Alpha-helical linker">
    <location>
        <begin position="98"/>
        <end position="117"/>
    </location>
</feature>
<feature type="modified residue" description="N6-acetyllysine" evidence="2">
    <location>
        <position position="55"/>
    </location>
</feature>
<feature type="sequence conflict" description="In Ref. 1; BAA13700." evidence="5" ref="1">
    <original>E</original>
    <variation>K</variation>
    <location>
        <position position="18"/>
    </location>
</feature>
<feature type="sequence conflict" description="In Ref. 1; BAA13700." evidence="5" ref="1">
    <original>I</original>
    <variation>V</variation>
    <location>
        <position position="95"/>
    </location>
</feature>
<feature type="helix" evidence="6">
    <location>
        <begin position="8"/>
        <end position="25"/>
    </location>
</feature>
<feature type="strand" evidence="6">
    <location>
        <begin position="32"/>
        <end position="45"/>
    </location>
</feature>
<feature type="turn" evidence="6">
    <location>
        <begin position="46"/>
        <end position="48"/>
    </location>
</feature>
<feature type="strand" evidence="6">
    <location>
        <begin position="49"/>
        <end position="60"/>
    </location>
</feature>
<feature type="turn" evidence="6">
    <location>
        <begin position="61"/>
        <end position="63"/>
    </location>
</feature>
<feature type="strand" evidence="6">
    <location>
        <begin position="67"/>
        <end position="76"/>
    </location>
</feature>
<feature type="strand" evidence="6">
    <location>
        <begin position="86"/>
        <end position="93"/>
    </location>
</feature>
<feature type="helix" evidence="6">
    <location>
        <begin position="100"/>
        <end position="112"/>
    </location>
</feature>
<feature type="strand" evidence="6">
    <location>
        <begin position="118"/>
        <end position="123"/>
    </location>
</feature>
<feature type="helix" evidence="6">
    <location>
        <begin position="131"/>
        <end position="133"/>
    </location>
</feature>
<feature type="helix" evidence="6">
    <location>
        <begin position="134"/>
        <end position="151"/>
    </location>
</feature>
<feature type="strand" evidence="6">
    <location>
        <begin position="158"/>
        <end position="169"/>
    </location>
</feature>
<feature type="strand" evidence="6">
    <location>
        <begin position="172"/>
        <end position="174"/>
    </location>
</feature>
<feature type="strand" evidence="6">
    <location>
        <begin position="176"/>
        <end position="186"/>
    </location>
</feature>
<feature type="turn" evidence="6">
    <location>
        <begin position="187"/>
        <end position="190"/>
    </location>
</feature>
<feature type="strand" evidence="6">
    <location>
        <begin position="191"/>
        <end position="202"/>
    </location>
</feature>
<feature type="turn" evidence="6">
    <location>
        <begin position="203"/>
        <end position="205"/>
    </location>
</feature>
<feature type="strand" evidence="6">
    <location>
        <begin position="206"/>
        <end position="214"/>
    </location>
</feature>
<dbReference type="EMBL" id="D88769">
    <property type="protein sequence ID" value="BAA13700.1"/>
    <property type="molecule type" value="mRNA"/>
</dbReference>
<dbReference type="EMBL" id="AK032170">
    <property type="protein sequence ID" value="BAC27739.1"/>
    <property type="molecule type" value="mRNA"/>
</dbReference>
<dbReference type="EMBL" id="AK149981">
    <property type="protein sequence ID" value="BAE29211.1"/>
    <property type="molecule type" value="mRNA"/>
</dbReference>
<dbReference type="CCDS" id="CCDS17397.1"/>
<dbReference type="RefSeq" id="NP_058033.2">
    <property type="nucleotide sequence ID" value="NM_016753.4"/>
</dbReference>
<dbReference type="PDB" id="1WNH">
    <property type="method" value="X-ray"/>
    <property type="resolution" value="1.83 A"/>
    <property type="chains" value="A=1-222"/>
</dbReference>
<dbReference type="PDBsum" id="1WNH"/>
<dbReference type="PCDDB" id="P70202"/>
<dbReference type="SMR" id="P70202"/>
<dbReference type="BioGRID" id="201231">
    <property type="interactions" value="1"/>
</dbReference>
<dbReference type="FunCoup" id="P70202">
    <property type="interactions" value="585"/>
</dbReference>
<dbReference type="STRING" id="10090.ENSMUSP00000060732"/>
<dbReference type="MEROPS" id="I47.001"/>
<dbReference type="iPTMnet" id="P70202"/>
<dbReference type="PhosphoSitePlus" id="P70202"/>
<dbReference type="SwissPalm" id="P70202"/>
<dbReference type="jPOST" id="P70202"/>
<dbReference type="PaxDb" id="10090-ENSMUSP00000060732"/>
<dbReference type="PeptideAtlas" id="P70202"/>
<dbReference type="ProteomicsDB" id="292056"/>
<dbReference type="Pumba" id="P70202"/>
<dbReference type="Antibodypedia" id="2121">
    <property type="antibodies" value="646 antibodies from 35 providers"/>
</dbReference>
<dbReference type="DNASU" id="17035"/>
<dbReference type="Ensembl" id="ENSMUST00000058981.3">
    <property type="protein sequence ID" value="ENSMUSP00000060732.3"/>
    <property type="gene ID" value="ENSMUSG00000047557.3"/>
</dbReference>
<dbReference type="GeneID" id="17035"/>
<dbReference type="KEGG" id="mmu:17035"/>
<dbReference type="UCSC" id="uc008pln.1">
    <property type="organism name" value="mouse"/>
</dbReference>
<dbReference type="AGR" id="MGI:107633"/>
<dbReference type="CTD" id="56925"/>
<dbReference type="MGI" id="MGI:107633">
    <property type="gene designation" value="Lxn"/>
</dbReference>
<dbReference type="VEuPathDB" id="HostDB:ENSMUSG00000047557"/>
<dbReference type="eggNOG" id="ENOG502RYUY">
    <property type="taxonomic scope" value="Eukaryota"/>
</dbReference>
<dbReference type="GeneTree" id="ENSGT00530000063813"/>
<dbReference type="HOGENOM" id="CLU_083048_0_0_1"/>
<dbReference type="InParanoid" id="P70202"/>
<dbReference type="OMA" id="MWQNSTE"/>
<dbReference type="OrthoDB" id="8898327at2759"/>
<dbReference type="PhylomeDB" id="P70202"/>
<dbReference type="TreeFam" id="TF332787"/>
<dbReference type="BioGRID-ORCS" id="17035">
    <property type="hits" value="4 hits in 75 CRISPR screens"/>
</dbReference>
<dbReference type="ChiTaRS" id="Lxn">
    <property type="organism name" value="mouse"/>
</dbReference>
<dbReference type="EvolutionaryTrace" id="P70202"/>
<dbReference type="PRO" id="PR:P70202"/>
<dbReference type="Proteomes" id="UP000000589">
    <property type="component" value="Chromosome 3"/>
</dbReference>
<dbReference type="RNAct" id="P70202">
    <property type="molecule type" value="protein"/>
</dbReference>
<dbReference type="Bgee" id="ENSMUSG00000047557">
    <property type="expression patterns" value="Expressed in facial nucleus and 265 other cell types or tissues"/>
</dbReference>
<dbReference type="ExpressionAtlas" id="P70202">
    <property type="expression patterns" value="baseline and differential"/>
</dbReference>
<dbReference type="GO" id="GO:0005737">
    <property type="term" value="C:cytoplasm"/>
    <property type="evidence" value="ECO:0007669"/>
    <property type="project" value="UniProtKB-SubCell"/>
</dbReference>
<dbReference type="GO" id="GO:0008201">
    <property type="term" value="F:heparin binding"/>
    <property type="evidence" value="ECO:0007669"/>
    <property type="project" value="UniProtKB-KW"/>
</dbReference>
<dbReference type="GO" id="GO:0008191">
    <property type="term" value="F:metalloendopeptidase inhibitor activity"/>
    <property type="evidence" value="ECO:0000315"/>
    <property type="project" value="MGI"/>
</dbReference>
<dbReference type="GO" id="GO:0050965">
    <property type="term" value="P:detection of temperature stimulus involved in sensory perception of pain"/>
    <property type="evidence" value="ECO:0000315"/>
    <property type="project" value="MGI"/>
</dbReference>
<dbReference type="GO" id="GO:0006954">
    <property type="term" value="P:inflammatory response"/>
    <property type="evidence" value="ECO:0007669"/>
    <property type="project" value="UniProtKB-KW"/>
</dbReference>
<dbReference type="FunFam" id="3.10.450.10:FF:000006">
    <property type="entry name" value="latexin"/>
    <property type="match status" value="1"/>
</dbReference>
<dbReference type="FunFam" id="3.10.450.10:FF:000007">
    <property type="entry name" value="latexin"/>
    <property type="match status" value="1"/>
</dbReference>
<dbReference type="Gene3D" id="3.10.450.10">
    <property type="match status" value="2"/>
</dbReference>
<dbReference type="InterPro" id="IPR049897">
    <property type="entry name" value="CYSTATIN_LXN"/>
</dbReference>
<dbReference type="InterPro" id="IPR046350">
    <property type="entry name" value="Cystatin_sf"/>
</dbReference>
<dbReference type="InterPro" id="IPR009684">
    <property type="entry name" value="Latexin"/>
</dbReference>
<dbReference type="PANTHER" id="PTHR28591">
    <property type="entry name" value="LATEXIN"/>
    <property type="match status" value="1"/>
</dbReference>
<dbReference type="PANTHER" id="PTHR28591:SF1">
    <property type="entry name" value="LATEXIN"/>
    <property type="match status" value="1"/>
</dbReference>
<dbReference type="Pfam" id="PF06907">
    <property type="entry name" value="LXN"/>
    <property type="match status" value="1"/>
</dbReference>
<dbReference type="PIRSF" id="PIRSF011132">
    <property type="entry name" value="Prot_inh_latexin"/>
    <property type="match status" value="1"/>
</dbReference>
<dbReference type="SUPFAM" id="SSF54403">
    <property type="entry name" value="Cystatin/monellin"/>
    <property type="match status" value="2"/>
</dbReference>
<dbReference type="PROSITE" id="PS52033">
    <property type="entry name" value="CYSTATIN_LXN"/>
    <property type="match status" value="2"/>
</dbReference>
<protein>
    <recommendedName>
        <fullName>Latexin</fullName>
    </recommendedName>
    <alternativeName>
        <fullName>Endogenous carboxypeptidase inhibitor</fullName>
        <shortName>ECI</shortName>
    </alternativeName>
    <alternativeName>
        <fullName>Tissue carboxypeptidase inhibitor</fullName>
        <shortName>TCI</shortName>
    </alternativeName>
</protein>
<reference key="1">
    <citation type="journal article" date="1997" name="Genomics">
        <title>Mapping to mouse chromosome 3 of the gene encoding latexin (Lxn) expressed in neocortical neurons in a region-specific manner.</title>
        <authorList>
            <person name="Jin M.-H."/>
            <person name="Uratani Y."/>
            <person name="Arimatsu Y."/>
        </authorList>
    </citation>
    <scope>NUCLEOTIDE SEQUENCE [MRNA]</scope>
</reference>
<reference key="2">
    <citation type="journal article" date="2005" name="Science">
        <title>The transcriptional landscape of the mammalian genome.</title>
        <authorList>
            <person name="Carninci P."/>
            <person name="Kasukawa T."/>
            <person name="Katayama S."/>
            <person name="Gough J."/>
            <person name="Frith M.C."/>
            <person name="Maeda N."/>
            <person name="Oyama R."/>
            <person name="Ravasi T."/>
            <person name="Lenhard B."/>
            <person name="Wells C."/>
            <person name="Kodzius R."/>
            <person name="Shimokawa K."/>
            <person name="Bajic V.B."/>
            <person name="Brenner S.E."/>
            <person name="Batalov S."/>
            <person name="Forrest A.R."/>
            <person name="Zavolan M."/>
            <person name="Davis M.J."/>
            <person name="Wilming L.G."/>
            <person name="Aidinis V."/>
            <person name="Allen J.E."/>
            <person name="Ambesi-Impiombato A."/>
            <person name="Apweiler R."/>
            <person name="Aturaliya R.N."/>
            <person name="Bailey T.L."/>
            <person name="Bansal M."/>
            <person name="Baxter L."/>
            <person name="Beisel K.W."/>
            <person name="Bersano T."/>
            <person name="Bono H."/>
            <person name="Chalk A.M."/>
            <person name="Chiu K.P."/>
            <person name="Choudhary V."/>
            <person name="Christoffels A."/>
            <person name="Clutterbuck D.R."/>
            <person name="Crowe M.L."/>
            <person name="Dalla E."/>
            <person name="Dalrymple B.P."/>
            <person name="de Bono B."/>
            <person name="Della Gatta G."/>
            <person name="di Bernardo D."/>
            <person name="Down T."/>
            <person name="Engstrom P."/>
            <person name="Fagiolini M."/>
            <person name="Faulkner G."/>
            <person name="Fletcher C.F."/>
            <person name="Fukushima T."/>
            <person name="Furuno M."/>
            <person name="Futaki S."/>
            <person name="Gariboldi M."/>
            <person name="Georgii-Hemming P."/>
            <person name="Gingeras T.R."/>
            <person name="Gojobori T."/>
            <person name="Green R.E."/>
            <person name="Gustincich S."/>
            <person name="Harbers M."/>
            <person name="Hayashi Y."/>
            <person name="Hensch T.K."/>
            <person name="Hirokawa N."/>
            <person name="Hill D."/>
            <person name="Huminiecki L."/>
            <person name="Iacono M."/>
            <person name="Ikeo K."/>
            <person name="Iwama A."/>
            <person name="Ishikawa T."/>
            <person name="Jakt M."/>
            <person name="Kanapin A."/>
            <person name="Katoh M."/>
            <person name="Kawasawa Y."/>
            <person name="Kelso J."/>
            <person name="Kitamura H."/>
            <person name="Kitano H."/>
            <person name="Kollias G."/>
            <person name="Krishnan S.P."/>
            <person name="Kruger A."/>
            <person name="Kummerfeld S.K."/>
            <person name="Kurochkin I.V."/>
            <person name="Lareau L.F."/>
            <person name="Lazarevic D."/>
            <person name="Lipovich L."/>
            <person name="Liu J."/>
            <person name="Liuni S."/>
            <person name="McWilliam S."/>
            <person name="Madan Babu M."/>
            <person name="Madera M."/>
            <person name="Marchionni L."/>
            <person name="Matsuda H."/>
            <person name="Matsuzawa S."/>
            <person name="Miki H."/>
            <person name="Mignone F."/>
            <person name="Miyake S."/>
            <person name="Morris K."/>
            <person name="Mottagui-Tabar S."/>
            <person name="Mulder N."/>
            <person name="Nakano N."/>
            <person name="Nakauchi H."/>
            <person name="Ng P."/>
            <person name="Nilsson R."/>
            <person name="Nishiguchi S."/>
            <person name="Nishikawa S."/>
            <person name="Nori F."/>
            <person name="Ohara O."/>
            <person name="Okazaki Y."/>
            <person name="Orlando V."/>
            <person name="Pang K.C."/>
            <person name="Pavan W.J."/>
            <person name="Pavesi G."/>
            <person name="Pesole G."/>
            <person name="Petrovsky N."/>
            <person name="Piazza S."/>
            <person name="Reed J."/>
            <person name="Reid J.F."/>
            <person name="Ring B.Z."/>
            <person name="Ringwald M."/>
            <person name="Rost B."/>
            <person name="Ruan Y."/>
            <person name="Salzberg S.L."/>
            <person name="Sandelin A."/>
            <person name="Schneider C."/>
            <person name="Schoenbach C."/>
            <person name="Sekiguchi K."/>
            <person name="Semple C.A."/>
            <person name="Seno S."/>
            <person name="Sessa L."/>
            <person name="Sheng Y."/>
            <person name="Shibata Y."/>
            <person name="Shimada H."/>
            <person name="Shimada K."/>
            <person name="Silva D."/>
            <person name="Sinclair B."/>
            <person name="Sperling S."/>
            <person name="Stupka E."/>
            <person name="Sugiura K."/>
            <person name="Sultana R."/>
            <person name="Takenaka Y."/>
            <person name="Taki K."/>
            <person name="Tammoja K."/>
            <person name="Tan S.L."/>
            <person name="Tang S."/>
            <person name="Taylor M.S."/>
            <person name="Tegner J."/>
            <person name="Teichmann S.A."/>
            <person name="Ueda H.R."/>
            <person name="van Nimwegen E."/>
            <person name="Verardo R."/>
            <person name="Wei C.L."/>
            <person name="Yagi K."/>
            <person name="Yamanishi H."/>
            <person name="Zabarovsky E."/>
            <person name="Zhu S."/>
            <person name="Zimmer A."/>
            <person name="Hide W."/>
            <person name="Bult C."/>
            <person name="Grimmond S.M."/>
            <person name="Teasdale R.D."/>
            <person name="Liu E.T."/>
            <person name="Brusic V."/>
            <person name="Quackenbush J."/>
            <person name="Wahlestedt C."/>
            <person name="Mattick J.S."/>
            <person name="Hume D.A."/>
            <person name="Kai C."/>
            <person name="Sasaki D."/>
            <person name="Tomaru Y."/>
            <person name="Fukuda S."/>
            <person name="Kanamori-Katayama M."/>
            <person name="Suzuki M."/>
            <person name="Aoki J."/>
            <person name="Arakawa T."/>
            <person name="Iida J."/>
            <person name="Imamura K."/>
            <person name="Itoh M."/>
            <person name="Kato T."/>
            <person name="Kawaji H."/>
            <person name="Kawagashira N."/>
            <person name="Kawashima T."/>
            <person name="Kojima M."/>
            <person name="Kondo S."/>
            <person name="Konno H."/>
            <person name="Nakano K."/>
            <person name="Ninomiya N."/>
            <person name="Nishio T."/>
            <person name="Okada M."/>
            <person name="Plessy C."/>
            <person name="Shibata K."/>
            <person name="Shiraki T."/>
            <person name="Suzuki S."/>
            <person name="Tagami M."/>
            <person name="Waki K."/>
            <person name="Watahiki A."/>
            <person name="Okamura-Oho Y."/>
            <person name="Suzuki H."/>
            <person name="Kawai J."/>
            <person name="Hayashizaki Y."/>
        </authorList>
    </citation>
    <scope>NUCLEOTIDE SEQUENCE [LARGE SCALE MRNA]</scope>
    <source>
        <strain>C57BL/6J</strain>
        <tissue>Bone marrow</tissue>
        <tissue>Olfactory bulb</tissue>
    </source>
</reference>
<reference key="3">
    <citation type="submission" date="2007-04" db="UniProtKB">
        <authorList>
            <person name="Lubec G."/>
            <person name="Kang S.U."/>
        </authorList>
    </citation>
    <scope>PROTEIN SEQUENCE OF 13-42 AND 160-167</scope>
    <scope>IDENTIFICATION BY MASS SPECTROMETRY</scope>
    <source>
        <strain>C57BL/6J</strain>
        <tissue>Brain</tissue>
    </source>
</reference>
<reference key="4">
    <citation type="journal article" date="2010" name="Cell">
        <title>A tissue-specific atlas of mouse protein phosphorylation and expression.</title>
        <authorList>
            <person name="Huttlin E.L."/>
            <person name="Jedrychowski M.P."/>
            <person name="Elias J.E."/>
            <person name="Goswami T."/>
            <person name="Rad R."/>
            <person name="Beausoleil S.A."/>
            <person name="Villen J."/>
            <person name="Haas W."/>
            <person name="Sowa M.E."/>
            <person name="Gygi S.P."/>
        </authorList>
    </citation>
    <scope>IDENTIFICATION BY MASS SPECTROMETRY [LARGE SCALE ANALYSIS]</scope>
    <source>
        <tissue>Brain</tissue>
        <tissue>Brown adipose tissue</tissue>
        <tissue>Heart</tissue>
        <tissue>Kidney</tissue>
        <tissue>Lung</tissue>
        <tissue>Pancreas</tissue>
        <tissue>Spleen</tissue>
        <tissue>Testis</tissue>
    </source>
</reference>
<reference key="5">
    <citation type="journal article" date="2005" name="Structure">
        <title>An inflammatory role for the mammalian carboxypeptidase inhibitor latexin: relationship to cystatins and the tumor suppressor TIG1.</title>
        <authorList>
            <person name="Aagaard A."/>
            <person name="Listwan P."/>
            <person name="Cowieson N."/>
            <person name="Huber T."/>
            <person name="Ravasi T."/>
            <person name="Wells C.A."/>
            <person name="Flanagan J.U."/>
            <person name="Kellie S."/>
            <person name="Hume D.A."/>
            <person name="Kobe B."/>
            <person name="Martin J.L."/>
        </authorList>
    </citation>
    <scope>X-RAY CRYSTALLOGRAPHY (1.83 ANGSTROMS)</scope>
    <scope>INDUCTION</scope>
    <scope>CYSTATIN-LIKE REGIONS</scope>
    <scope>FUNCTION</scope>
    <scope>TISSUE SPECIFICITY</scope>
</reference>
<accession>P70202</accession>
<accession>Q3UDQ0</accession>
<accession>Q8CCS8</accession>
<proteinExistence type="evidence at protein level"/>
<organism>
    <name type="scientific">Mus musculus</name>
    <name type="common">Mouse</name>
    <dbReference type="NCBI Taxonomy" id="10090"/>
    <lineage>
        <taxon>Eukaryota</taxon>
        <taxon>Metazoa</taxon>
        <taxon>Chordata</taxon>
        <taxon>Craniata</taxon>
        <taxon>Vertebrata</taxon>
        <taxon>Euteleostomi</taxon>
        <taxon>Mammalia</taxon>
        <taxon>Eutheria</taxon>
        <taxon>Euarchontoglires</taxon>
        <taxon>Glires</taxon>
        <taxon>Rodentia</taxon>
        <taxon>Myomorpha</taxon>
        <taxon>Muroidea</taxon>
        <taxon>Muridae</taxon>
        <taxon>Murinae</taxon>
        <taxon>Mus</taxon>
        <taxon>Mus</taxon>
    </lineage>
</organism>
<comment type="function">
    <text evidence="1 4">Hardly reversible, non-competitive, and potent inhibitor of CPA1, CPA2 and CPA4 (By similarity). May play a role in inflammation.</text>
</comment>
<comment type="subcellular location">
    <subcellularLocation>
        <location evidence="5">Cytoplasm</location>
    </subcellularLocation>
</comment>
<comment type="tissue specificity">
    <text evidence="4">Highly enriched in macrophages.</text>
</comment>
<comment type="induction">
    <text evidence="4">By CSF1 and lipopolysaccharides (LPS).</text>
</comment>
<comment type="similarity">
    <text evidence="5">Belongs to the protease inhibitor I47 (latexin) family.</text>
</comment>
<sequence length="222" mass="25492">MEIPPTHYAASRAASVAENCINYQQGTPHKLFLVQTVQQASKEDIPGRGHKYHLKFSVEEIIQKQVTVNCTAEVLYPQMGQGSAPEVNFTFEGEIGKNPDEEDNTFYQSLMSLKRPLEAQDIPDNFGNVSPQMKPVQHLAWVACGYVMWQNSTEDTWYKMLKIQTVKQVQRNDDFIELDYTILLHDIASQEIIPWQMQVLWHPQYGTKVKHNSRLPKEGQAE</sequence>
<keyword id="KW-0002">3D-structure</keyword>
<keyword id="KW-0007">Acetylation</keyword>
<keyword id="KW-0963">Cytoplasm</keyword>
<keyword id="KW-0903">Direct protein sequencing</keyword>
<keyword id="KW-0358">Heparin-binding</keyword>
<keyword id="KW-0395">Inflammatory response</keyword>
<keyword id="KW-0481">Metalloenzyme inhibitor</keyword>
<keyword id="KW-0483">Metalloprotease inhibitor</keyword>
<keyword id="KW-0646">Protease inhibitor</keyword>
<keyword id="KW-1185">Reference proteome</keyword>
<keyword id="KW-0677">Repeat</keyword>